<reference key="1">
    <citation type="journal article" date="2006" name="J. Bacteriol.">
        <title>The genome sequence of Methanosphaera stadtmanae reveals why this human intestinal archaeon is restricted to methanol and H2 for methane formation and ATP synthesis.</title>
        <authorList>
            <person name="Fricke W.F."/>
            <person name="Seedorf H."/>
            <person name="Henne A."/>
            <person name="Kruer M."/>
            <person name="Liesegang H."/>
            <person name="Hedderich R."/>
            <person name="Gottschalk G."/>
            <person name="Thauer R.K."/>
        </authorList>
    </citation>
    <scope>NUCLEOTIDE SEQUENCE [LARGE SCALE GENOMIC DNA]</scope>
    <source>
        <strain>ATCC 43021 / DSM 3091 / JCM 11832 / MCB-3</strain>
    </source>
</reference>
<gene>
    <name evidence="1" type="primary">rps24e</name>
    <name type="ordered locus">Msp_0621</name>
</gene>
<dbReference type="EMBL" id="CP000102">
    <property type="protein sequence ID" value="ABC57019.1"/>
    <property type="molecule type" value="Genomic_DNA"/>
</dbReference>
<dbReference type="RefSeq" id="WP_011406219.1">
    <property type="nucleotide sequence ID" value="NC_007681.1"/>
</dbReference>
<dbReference type="SMR" id="Q2NGN4"/>
<dbReference type="STRING" id="339860.Msp_0621"/>
<dbReference type="KEGG" id="mst:Msp_0621"/>
<dbReference type="eggNOG" id="arCOG04182">
    <property type="taxonomic scope" value="Archaea"/>
</dbReference>
<dbReference type="HOGENOM" id="CLU_107248_3_1_2"/>
<dbReference type="OrthoDB" id="27533at2157"/>
<dbReference type="Proteomes" id="UP000001931">
    <property type="component" value="Chromosome"/>
</dbReference>
<dbReference type="GO" id="GO:1990904">
    <property type="term" value="C:ribonucleoprotein complex"/>
    <property type="evidence" value="ECO:0007669"/>
    <property type="project" value="UniProtKB-KW"/>
</dbReference>
<dbReference type="GO" id="GO:0005840">
    <property type="term" value="C:ribosome"/>
    <property type="evidence" value="ECO:0007669"/>
    <property type="project" value="UniProtKB-KW"/>
</dbReference>
<dbReference type="GO" id="GO:0003735">
    <property type="term" value="F:structural constituent of ribosome"/>
    <property type="evidence" value="ECO:0007669"/>
    <property type="project" value="InterPro"/>
</dbReference>
<dbReference type="GO" id="GO:0006412">
    <property type="term" value="P:translation"/>
    <property type="evidence" value="ECO:0007669"/>
    <property type="project" value="UniProtKB-UniRule"/>
</dbReference>
<dbReference type="Gene3D" id="3.30.70.330">
    <property type="match status" value="1"/>
</dbReference>
<dbReference type="HAMAP" id="MF_00545">
    <property type="entry name" value="Ribosomal_eS24"/>
    <property type="match status" value="1"/>
</dbReference>
<dbReference type="InterPro" id="IPR012677">
    <property type="entry name" value="Nucleotide-bd_a/b_plait_sf"/>
</dbReference>
<dbReference type="InterPro" id="IPR001976">
    <property type="entry name" value="Ribosomal_eS24"/>
</dbReference>
<dbReference type="InterPro" id="IPR012678">
    <property type="entry name" value="Ribosomal_uL23/eL15/eS24_sf"/>
</dbReference>
<dbReference type="Pfam" id="PF01282">
    <property type="entry name" value="Ribosomal_S24e"/>
    <property type="match status" value="1"/>
</dbReference>
<dbReference type="SUPFAM" id="SSF54189">
    <property type="entry name" value="Ribosomal proteins S24e, L23 and L15e"/>
    <property type="match status" value="1"/>
</dbReference>
<name>RS24_METST</name>
<sequence>MEIKIIEKKENPLLNRTEIKFECEYPTEGTPTILDVKHKLVALEDSSNDLLVVDSMKPSYGVPTAFGLAKIYDSTESLAKIETKSVIAKNEEPEEEPEEEAEDAE</sequence>
<protein>
    <recommendedName>
        <fullName evidence="1">Small ribosomal subunit protein eS24</fullName>
    </recommendedName>
    <alternativeName>
        <fullName evidence="3">30S ribosomal protein S24e</fullName>
    </alternativeName>
</protein>
<feature type="chain" id="PRO_1000017745" description="Small ribosomal subunit protein eS24">
    <location>
        <begin position="1"/>
        <end position="105"/>
    </location>
</feature>
<feature type="region of interest" description="Disordered" evidence="2">
    <location>
        <begin position="85"/>
        <end position="105"/>
    </location>
</feature>
<feature type="compositionally biased region" description="Acidic residues" evidence="2">
    <location>
        <begin position="92"/>
        <end position="105"/>
    </location>
</feature>
<proteinExistence type="inferred from homology"/>
<accession>Q2NGN4</accession>
<evidence type="ECO:0000255" key="1">
    <source>
        <dbReference type="HAMAP-Rule" id="MF_00545"/>
    </source>
</evidence>
<evidence type="ECO:0000256" key="2">
    <source>
        <dbReference type="SAM" id="MobiDB-lite"/>
    </source>
</evidence>
<evidence type="ECO:0000305" key="3"/>
<organism>
    <name type="scientific">Methanosphaera stadtmanae (strain ATCC 43021 / DSM 3091 / JCM 11832 / MCB-3)</name>
    <dbReference type="NCBI Taxonomy" id="339860"/>
    <lineage>
        <taxon>Archaea</taxon>
        <taxon>Methanobacteriati</taxon>
        <taxon>Methanobacteriota</taxon>
        <taxon>Methanomada group</taxon>
        <taxon>Methanobacteria</taxon>
        <taxon>Methanobacteriales</taxon>
        <taxon>Methanobacteriaceae</taxon>
        <taxon>Methanosphaera</taxon>
    </lineage>
</organism>
<keyword id="KW-1185">Reference proteome</keyword>
<keyword id="KW-0687">Ribonucleoprotein</keyword>
<keyword id="KW-0689">Ribosomal protein</keyword>
<comment type="similarity">
    <text evidence="1">Belongs to the eukaryotic ribosomal protein eS24 family.</text>
</comment>